<dbReference type="EC" id="4.2.1.130" evidence="3"/>
<dbReference type="EMBL" id="CU329670">
    <property type="protein sequence ID" value="CAA89952.1"/>
    <property type="molecule type" value="Genomic_DNA"/>
</dbReference>
<dbReference type="PIR" id="S55480">
    <property type="entry name" value="S55480"/>
</dbReference>
<dbReference type="RefSeq" id="NP_592815.1">
    <property type="nucleotide sequence ID" value="NM_001018215.2"/>
</dbReference>
<dbReference type="SMR" id="Q09675"/>
<dbReference type="BioGRID" id="278290">
    <property type="interactions" value="2"/>
</dbReference>
<dbReference type="FunCoup" id="Q09675">
    <property type="interactions" value="331"/>
</dbReference>
<dbReference type="STRING" id="284812.Q09675"/>
<dbReference type="MEROPS" id="C56.A05"/>
<dbReference type="PaxDb" id="4896-SPAC5H10.02c.1"/>
<dbReference type="EnsemblFungi" id="SPAC5H10.02c.1">
    <property type="protein sequence ID" value="SPAC5H10.02c.1:pep"/>
    <property type="gene ID" value="SPAC5H10.02c"/>
</dbReference>
<dbReference type="GeneID" id="2541799"/>
<dbReference type="KEGG" id="spo:2541799"/>
<dbReference type="PomBase" id="SPAC5H10.02c">
    <property type="gene designation" value="hsp3102"/>
</dbReference>
<dbReference type="VEuPathDB" id="FungiDB:SPAC5H10.02c"/>
<dbReference type="eggNOG" id="ENOG502RZ3Y">
    <property type="taxonomic scope" value="Eukaryota"/>
</dbReference>
<dbReference type="HOGENOM" id="CLU_070319_1_0_1"/>
<dbReference type="InParanoid" id="Q09675"/>
<dbReference type="OMA" id="KNDDFWT"/>
<dbReference type="PhylomeDB" id="Q09675"/>
<dbReference type="BRENDA" id="4.2.1.130">
    <property type="organism ID" value="5613"/>
</dbReference>
<dbReference type="PRO" id="PR:Q09675"/>
<dbReference type="Proteomes" id="UP000002485">
    <property type="component" value="Chromosome I"/>
</dbReference>
<dbReference type="GO" id="GO:0005737">
    <property type="term" value="C:cytoplasm"/>
    <property type="evidence" value="ECO:0000314"/>
    <property type="project" value="PomBase"/>
</dbReference>
<dbReference type="GO" id="GO:0005829">
    <property type="term" value="C:cytosol"/>
    <property type="evidence" value="ECO:0007005"/>
    <property type="project" value="PomBase"/>
</dbReference>
<dbReference type="GO" id="GO:0005634">
    <property type="term" value="C:nucleus"/>
    <property type="evidence" value="ECO:0007005"/>
    <property type="project" value="PomBase"/>
</dbReference>
<dbReference type="GO" id="GO:0019172">
    <property type="term" value="F:glyoxalase III activity"/>
    <property type="evidence" value="ECO:0000314"/>
    <property type="project" value="PomBase"/>
</dbReference>
<dbReference type="GO" id="GO:1990748">
    <property type="term" value="P:cellular detoxification"/>
    <property type="evidence" value="ECO:0000303"/>
    <property type="project" value="PomBase"/>
</dbReference>
<dbReference type="GO" id="GO:0019243">
    <property type="term" value="P:methylglyoxal catabolic process to D-lactate via S-lactoyl-glutathione"/>
    <property type="evidence" value="ECO:0000318"/>
    <property type="project" value="GO_Central"/>
</dbReference>
<dbReference type="CDD" id="cd03147">
    <property type="entry name" value="GATase1_Ydr533c_like"/>
    <property type="match status" value="1"/>
</dbReference>
<dbReference type="FunFam" id="3.40.50.880:FF:000051">
    <property type="entry name" value="Glutathione-independent glyoxalase HSP31"/>
    <property type="match status" value="1"/>
</dbReference>
<dbReference type="Gene3D" id="3.40.50.880">
    <property type="match status" value="1"/>
</dbReference>
<dbReference type="InterPro" id="IPR029062">
    <property type="entry name" value="Class_I_gatase-like"/>
</dbReference>
<dbReference type="InterPro" id="IPR002818">
    <property type="entry name" value="DJ-1/PfpI"/>
</dbReference>
<dbReference type="InterPro" id="IPR050325">
    <property type="entry name" value="Prot/Nucl_acid_deglycase"/>
</dbReference>
<dbReference type="PANTHER" id="PTHR48094:SF24">
    <property type="entry name" value="GLUTATHIONE-INDEPENDENT GLYOXALASE HSP3101-RELATED"/>
    <property type="match status" value="1"/>
</dbReference>
<dbReference type="PANTHER" id="PTHR48094">
    <property type="entry name" value="PROTEIN/NUCLEIC ACID DEGLYCASE DJ-1-RELATED"/>
    <property type="match status" value="1"/>
</dbReference>
<dbReference type="Pfam" id="PF01965">
    <property type="entry name" value="DJ-1_PfpI"/>
    <property type="match status" value="1"/>
</dbReference>
<dbReference type="SUPFAM" id="SSF52317">
    <property type="entry name" value="Class I glutamine amidotransferase-like"/>
    <property type="match status" value="1"/>
</dbReference>
<protein>
    <recommendedName>
        <fullName evidence="4">Glutathione-independent glyoxalase hsp3102</fullName>
        <ecNumber evidence="3">4.2.1.130</ecNumber>
    </recommendedName>
    <alternativeName>
        <fullName evidence="6">Glyoxalase 3 homolog 2</fullName>
    </alternativeName>
    <alternativeName>
        <fullName evidence="4">Heat shock protein 31 homolog 2</fullName>
    </alternativeName>
</protein>
<name>HSP32_SCHPO</name>
<comment type="function">
    <text evidence="1 3">Catalyzes the conversion of methylglyoxal (MG) to D-lactate in a single glutathione (GSH)-independent step (PubMed:24758716). May play a role in detoxifying endogenously produced glyoxals. Involved in protection against reactive oxygen species (ROS) (By similarity).</text>
</comment>
<comment type="catalytic activity">
    <reaction evidence="3">
        <text>methylglyoxal + H2O = (R)-lactate + H(+)</text>
        <dbReference type="Rhea" id="RHEA:27754"/>
        <dbReference type="ChEBI" id="CHEBI:15377"/>
        <dbReference type="ChEBI" id="CHEBI:15378"/>
        <dbReference type="ChEBI" id="CHEBI:16004"/>
        <dbReference type="ChEBI" id="CHEBI:17158"/>
        <dbReference type="EC" id="4.2.1.130"/>
    </reaction>
</comment>
<comment type="biophysicochemical properties">
    <kinetics>
        <KM evidence="3">2.7 mM for methylglyoxal</KM>
        <text evidence="3">kcat is 58.0 min(-1) with methylglyoxal as substrate.</text>
    </kinetics>
</comment>
<comment type="subcellular location">
    <subcellularLocation>
        <location evidence="2 3">Cytoplasm</location>
    </subcellularLocation>
    <subcellularLocation>
        <location evidence="2">Nucleus</location>
    </subcellularLocation>
</comment>
<comment type="similarity">
    <text evidence="5">Belongs to the peptidase C56 family. HSP31-like subfamily.</text>
</comment>
<proteinExistence type="evidence at protein level"/>
<sequence>MSIAKGKNALLVASSYYGPFYPDGKNTGVHFSELLIPYNVFKKAGFNVQFVSENGSYKFDDHSIEESKLGDFERKVFNDKNDDFWTNLNNMKKASDIVGKDYQLLFVAGGHAAMFDLPKATNLQAVAREVFTNGGVLSAVCHGPVLLANVKNPQSVEGKTVVYHKHVTAFNKAGEEKMGVMDELKKRGMKSLNEIFAEAGATFIDPPNPNVNFTQIDGKIVTGVNPQSAKSTAEAAVSAL</sequence>
<gene>
    <name evidence="4" type="primary">hsp3102</name>
    <name evidence="7" type="ORF">SPAC5H10.02c</name>
</gene>
<reference key="1">
    <citation type="journal article" date="2002" name="Nature">
        <title>The genome sequence of Schizosaccharomyces pombe.</title>
        <authorList>
            <person name="Wood V."/>
            <person name="Gwilliam R."/>
            <person name="Rajandream M.A."/>
            <person name="Lyne M.H."/>
            <person name="Lyne R."/>
            <person name="Stewart A."/>
            <person name="Sgouros J.G."/>
            <person name="Peat N."/>
            <person name="Hayles J."/>
            <person name="Baker S.G."/>
            <person name="Basham D."/>
            <person name="Bowman S."/>
            <person name="Brooks K."/>
            <person name="Brown D."/>
            <person name="Brown S."/>
            <person name="Chillingworth T."/>
            <person name="Churcher C.M."/>
            <person name="Collins M."/>
            <person name="Connor R."/>
            <person name="Cronin A."/>
            <person name="Davis P."/>
            <person name="Feltwell T."/>
            <person name="Fraser A."/>
            <person name="Gentles S."/>
            <person name="Goble A."/>
            <person name="Hamlin N."/>
            <person name="Harris D.E."/>
            <person name="Hidalgo J."/>
            <person name="Hodgson G."/>
            <person name="Holroyd S."/>
            <person name="Hornsby T."/>
            <person name="Howarth S."/>
            <person name="Huckle E.J."/>
            <person name="Hunt S."/>
            <person name="Jagels K."/>
            <person name="James K.D."/>
            <person name="Jones L."/>
            <person name="Jones M."/>
            <person name="Leather S."/>
            <person name="McDonald S."/>
            <person name="McLean J."/>
            <person name="Mooney P."/>
            <person name="Moule S."/>
            <person name="Mungall K.L."/>
            <person name="Murphy L.D."/>
            <person name="Niblett D."/>
            <person name="Odell C."/>
            <person name="Oliver K."/>
            <person name="O'Neil S."/>
            <person name="Pearson D."/>
            <person name="Quail M.A."/>
            <person name="Rabbinowitsch E."/>
            <person name="Rutherford K.M."/>
            <person name="Rutter S."/>
            <person name="Saunders D."/>
            <person name="Seeger K."/>
            <person name="Sharp S."/>
            <person name="Skelton J."/>
            <person name="Simmonds M.N."/>
            <person name="Squares R."/>
            <person name="Squares S."/>
            <person name="Stevens K."/>
            <person name="Taylor K."/>
            <person name="Taylor R.G."/>
            <person name="Tivey A."/>
            <person name="Walsh S.V."/>
            <person name="Warren T."/>
            <person name="Whitehead S."/>
            <person name="Woodward J.R."/>
            <person name="Volckaert G."/>
            <person name="Aert R."/>
            <person name="Robben J."/>
            <person name="Grymonprez B."/>
            <person name="Weltjens I."/>
            <person name="Vanstreels E."/>
            <person name="Rieger M."/>
            <person name="Schaefer M."/>
            <person name="Mueller-Auer S."/>
            <person name="Gabel C."/>
            <person name="Fuchs M."/>
            <person name="Duesterhoeft A."/>
            <person name="Fritzc C."/>
            <person name="Holzer E."/>
            <person name="Moestl D."/>
            <person name="Hilbert H."/>
            <person name="Borzym K."/>
            <person name="Langer I."/>
            <person name="Beck A."/>
            <person name="Lehrach H."/>
            <person name="Reinhardt R."/>
            <person name="Pohl T.M."/>
            <person name="Eger P."/>
            <person name="Zimmermann W."/>
            <person name="Wedler H."/>
            <person name="Wambutt R."/>
            <person name="Purnelle B."/>
            <person name="Goffeau A."/>
            <person name="Cadieu E."/>
            <person name="Dreano S."/>
            <person name="Gloux S."/>
            <person name="Lelaure V."/>
            <person name="Mottier S."/>
            <person name="Galibert F."/>
            <person name="Aves S.J."/>
            <person name="Xiang Z."/>
            <person name="Hunt C."/>
            <person name="Moore K."/>
            <person name="Hurst S.M."/>
            <person name="Lucas M."/>
            <person name="Rochet M."/>
            <person name="Gaillardin C."/>
            <person name="Tallada V.A."/>
            <person name="Garzon A."/>
            <person name="Thode G."/>
            <person name="Daga R.R."/>
            <person name="Cruzado L."/>
            <person name="Jimenez J."/>
            <person name="Sanchez M."/>
            <person name="del Rey F."/>
            <person name="Benito J."/>
            <person name="Dominguez A."/>
            <person name="Revuelta J.L."/>
            <person name="Moreno S."/>
            <person name="Armstrong J."/>
            <person name="Forsburg S.L."/>
            <person name="Cerutti L."/>
            <person name="Lowe T."/>
            <person name="McCombie W.R."/>
            <person name="Paulsen I."/>
            <person name="Potashkin J."/>
            <person name="Shpakovski G.V."/>
            <person name="Ussery D."/>
            <person name="Barrell B.G."/>
            <person name="Nurse P."/>
        </authorList>
    </citation>
    <scope>NUCLEOTIDE SEQUENCE [LARGE SCALE GENOMIC DNA]</scope>
    <source>
        <strain>972 / ATCC 24843</strain>
    </source>
</reference>
<reference key="2">
    <citation type="journal article" date="2006" name="Nat. Biotechnol.">
        <title>ORFeome cloning and global analysis of protein localization in the fission yeast Schizosaccharomyces pombe.</title>
        <authorList>
            <person name="Matsuyama A."/>
            <person name="Arai R."/>
            <person name="Yashiroda Y."/>
            <person name="Shirai A."/>
            <person name="Kamata A."/>
            <person name="Sekido S."/>
            <person name="Kobayashi Y."/>
            <person name="Hashimoto A."/>
            <person name="Hamamoto M."/>
            <person name="Hiraoka Y."/>
            <person name="Horinouchi S."/>
            <person name="Yoshida M."/>
        </authorList>
    </citation>
    <scope>SUBCELLULAR LOCATION [LARGE SCALE ANALYSIS]</scope>
</reference>
<reference key="3">
    <citation type="journal article" date="2014" name="BMC Evol. Biol.">
        <title>Identification of glutathione (GSH)-independent glyoxalase III from Schizosaccharomyces pombe.</title>
        <authorList>
            <person name="Zhao Q."/>
            <person name="Su Y."/>
            <person name="Wang Z."/>
            <person name="Chen C."/>
            <person name="Wu T."/>
            <person name="Huang Y."/>
        </authorList>
    </citation>
    <scope>FUNCTION</scope>
    <scope>CATALYTIC ACTIVITY</scope>
    <scope>BIOPHYSICOCHEMICAL PROPERTIES</scope>
    <scope>SUBCELLULAR LOCATION</scope>
</reference>
<keyword id="KW-0963">Cytoplasm</keyword>
<keyword id="KW-0456">Lyase</keyword>
<keyword id="KW-0539">Nucleus</keyword>
<keyword id="KW-1185">Reference proteome</keyword>
<keyword id="KW-0346">Stress response</keyword>
<evidence type="ECO:0000250" key="1">
    <source>
        <dbReference type="UniProtKB" id="Q04432"/>
    </source>
</evidence>
<evidence type="ECO:0000269" key="2">
    <source>
    </source>
</evidence>
<evidence type="ECO:0000269" key="3">
    <source>
    </source>
</evidence>
<evidence type="ECO:0000303" key="4">
    <source>
    </source>
</evidence>
<evidence type="ECO:0000305" key="5"/>
<evidence type="ECO:0000305" key="6">
    <source>
    </source>
</evidence>
<evidence type="ECO:0000312" key="7">
    <source>
        <dbReference type="PomBase" id="SPAC5H10.02c"/>
    </source>
</evidence>
<accession>Q09675</accession>
<feature type="chain" id="PRO_0000157854" description="Glutathione-independent glyoxalase hsp3102">
    <location>
        <begin position="1"/>
        <end position="240"/>
    </location>
</feature>
<feature type="active site" evidence="1">
    <location>
        <position position="141"/>
    </location>
</feature>
<feature type="active site" evidence="1">
    <location>
        <position position="142"/>
    </location>
</feature>
<feature type="active site" evidence="1">
    <location>
        <position position="175"/>
    </location>
</feature>
<organism>
    <name type="scientific">Schizosaccharomyces pombe (strain 972 / ATCC 24843)</name>
    <name type="common">Fission yeast</name>
    <dbReference type="NCBI Taxonomy" id="284812"/>
    <lineage>
        <taxon>Eukaryota</taxon>
        <taxon>Fungi</taxon>
        <taxon>Dikarya</taxon>
        <taxon>Ascomycota</taxon>
        <taxon>Taphrinomycotina</taxon>
        <taxon>Schizosaccharomycetes</taxon>
        <taxon>Schizosaccharomycetales</taxon>
        <taxon>Schizosaccharomycetaceae</taxon>
        <taxon>Schizosaccharomyces</taxon>
    </lineage>
</organism>